<reference key="1">
    <citation type="journal article" date="1997" name="J. Bacteriol.">
        <title>Complete genome sequence of Methanobacterium thermoautotrophicum deltaH: functional analysis and comparative genomics.</title>
        <authorList>
            <person name="Smith D.R."/>
            <person name="Doucette-Stamm L.A."/>
            <person name="Deloughery C."/>
            <person name="Lee H.-M."/>
            <person name="Dubois J."/>
            <person name="Aldredge T."/>
            <person name="Bashirzadeh R."/>
            <person name="Blakely D."/>
            <person name="Cook R."/>
            <person name="Gilbert K."/>
            <person name="Harrison D."/>
            <person name="Hoang L."/>
            <person name="Keagle P."/>
            <person name="Lumm W."/>
            <person name="Pothier B."/>
            <person name="Qiu D."/>
            <person name="Spadafora R."/>
            <person name="Vicare R."/>
            <person name="Wang Y."/>
            <person name="Wierzbowski J."/>
            <person name="Gibson R."/>
            <person name="Jiwani N."/>
            <person name="Caruso A."/>
            <person name="Bush D."/>
            <person name="Safer H."/>
            <person name="Patwell D."/>
            <person name="Prabhakar S."/>
            <person name="McDougall S."/>
            <person name="Shimer G."/>
            <person name="Goyal A."/>
            <person name="Pietrovski S."/>
            <person name="Church G.M."/>
            <person name="Daniels C.J."/>
            <person name="Mao J.-I."/>
            <person name="Rice P."/>
            <person name="Noelling J."/>
            <person name="Reeve J.N."/>
        </authorList>
    </citation>
    <scope>NUCLEOTIDE SEQUENCE [LARGE SCALE GENOMIC DNA]</scope>
    <source>
        <strain>ATCC 29096 / DSM 1053 / JCM 10044 / NBRC 100330 / Delta H</strain>
    </source>
</reference>
<proteinExistence type="inferred from homology"/>
<accession>O26820</accession>
<protein>
    <recommendedName>
        <fullName>tRNA (guanine(10)-N2)-dimethyltransferase</fullName>
        <ecNumber>2.1.1.213</ecNumber>
    </recommendedName>
    <alternativeName>
        <fullName>tRNA:G10 dimethyltransferase</fullName>
    </alternativeName>
</protein>
<sequence>MEMMVLLSQEHPELPSAELRSVLMSEGIDFSVIESGSGYEVIDAPRSTWKILKKRLAYAHEISEVIGYAAADDLDDAAEEIDWSKYVRESFAVRIRKLCGDVDSRTLERTIGAIIKEDTGLKVDLEKPWTLIRPVLINDRFILTRRLAVISKEHFNQARPHKRPFFYPGSMSPKLARCMVNLSGVKAGDRILDPFCGTGGILIEAGLMGVRVVGADIDWRMVEGTRENLQHYGITDFEVIRSDARDLRLDEKVDAIVTDPPYGISASTAGEKSEKLYREFLDSAHSNLAEGGMICMAAPHYLDLESLIDERFSIRERYSMRMHRSLTRVIRVIERV</sequence>
<dbReference type="EC" id="2.1.1.213"/>
<dbReference type="EMBL" id="AE000666">
    <property type="protein sequence ID" value="AAB85229.1"/>
    <property type="molecule type" value="Genomic_DNA"/>
</dbReference>
<dbReference type="PIR" id="G69196">
    <property type="entry name" value="G69196"/>
</dbReference>
<dbReference type="SMR" id="O26820"/>
<dbReference type="FunCoup" id="O26820">
    <property type="interactions" value="29"/>
</dbReference>
<dbReference type="STRING" id="187420.MTH_724"/>
<dbReference type="PaxDb" id="187420-MTH_724"/>
<dbReference type="EnsemblBacteria" id="AAB85229">
    <property type="protein sequence ID" value="AAB85229"/>
    <property type="gene ID" value="MTH_724"/>
</dbReference>
<dbReference type="KEGG" id="mth:MTH_724"/>
<dbReference type="PATRIC" id="fig|187420.15.peg.709"/>
<dbReference type="HOGENOM" id="CLU_057819_1_0_2"/>
<dbReference type="InParanoid" id="O26820"/>
<dbReference type="Proteomes" id="UP000005223">
    <property type="component" value="Chromosome"/>
</dbReference>
<dbReference type="GO" id="GO:0005737">
    <property type="term" value="C:cytoplasm"/>
    <property type="evidence" value="ECO:0007669"/>
    <property type="project" value="UniProtKB-SubCell"/>
</dbReference>
<dbReference type="GO" id="GO:0160101">
    <property type="term" value="F:tRNA (guanine(10)-N2)-dimethyltransferase activity"/>
    <property type="evidence" value="ECO:0007669"/>
    <property type="project" value="UniProtKB-EC"/>
</dbReference>
<dbReference type="GO" id="GO:0160102">
    <property type="term" value="F:tRNA (guanine(10)-N2)-methyltransferase activity"/>
    <property type="evidence" value="ECO:0007669"/>
    <property type="project" value="InterPro"/>
</dbReference>
<dbReference type="GO" id="GO:0000049">
    <property type="term" value="F:tRNA binding"/>
    <property type="evidence" value="ECO:0007669"/>
    <property type="project" value="UniProtKB-KW"/>
</dbReference>
<dbReference type="GO" id="GO:0030488">
    <property type="term" value="P:tRNA methylation"/>
    <property type="evidence" value="ECO:0007669"/>
    <property type="project" value="InterPro"/>
</dbReference>
<dbReference type="CDD" id="cd02440">
    <property type="entry name" value="AdoMet_MTases"/>
    <property type="match status" value="1"/>
</dbReference>
<dbReference type="CDD" id="cd11715">
    <property type="entry name" value="THUMP_AdoMetMT"/>
    <property type="match status" value="1"/>
</dbReference>
<dbReference type="FunFam" id="3.40.50.150:FF:000251">
    <property type="entry name" value="Putative RNA methylase"/>
    <property type="match status" value="1"/>
</dbReference>
<dbReference type="Gene3D" id="3.30.2130.30">
    <property type="match status" value="1"/>
</dbReference>
<dbReference type="Gene3D" id="3.40.50.150">
    <property type="entry name" value="Vaccinia Virus protein VP39"/>
    <property type="match status" value="1"/>
</dbReference>
<dbReference type="InterPro" id="IPR002052">
    <property type="entry name" value="DNA_methylase_N6_adenine_CS"/>
</dbReference>
<dbReference type="InterPro" id="IPR000241">
    <property type="entry name" value="RlmKL-like_Mtase"/>
</dbReference>
<dbReference type="InterPro" id="IPR053943">
    <property type="entry name" value="RlmKL-like_Mtase_CS"/>
</dbReference>
<dbReference type="InterPro" id="IPR029063">
    <property type="entry name" value="SAM-dependent_MTases_sf"/>
</dbReference>
<dbReference type="InterPro" id="IPR004114">
    <property type="entry name" value="THUMP_dom"/>
</dbReference>
<dbReference type="InterPro" id="IPR005885">
    <property type="entry name" value="TrmG10"/>
</dbReference>
<dbReference type="NCBIfam" id="TIGR01177">
    <property type="entry name" value="TIGR01177 family methyltransferase"/>
    <property type="match status" value="1"/>
</dbReference>
<dbReference type="PANTHER" id="PTHR14911:SF21">
    <property type="entry name" value="N2-METHYLGUANOSINE TRNA METHYLTRANSFERASE"/>
    <property type="match status" value="1"/>
</dbReference>
<dbReference type="PANTHER" id="PTHR14911">
    <property type="entry name" value="THUMP DOMAIN-CONTAINING"/>
    <property type="match status" value="1"/>
</dbReference>
<dbReference type="Pfam" id="PF02926">
    <property type="entry name" value="THUMP"/>
    <property type="match status" value="1"/>
</dbReference>
<dbReference type="Pfam" id="PF01170">
    <property type="entry name" value="UPF0020"/>
    <property type="match status" value="1"/>
</dbReference>
<dbReference type="PIRSF" id="PIRSF017259">
    <property type="entry name" value="tRNA_mtfrase_TRM11"/>
    <property type="match status" value="1"/>
</dbReference>
<dbReference type="PRINTS" id="PR00507">
    <property type="entry name" value="N12N6MTFRASE"/>
</dbReference>
<dbReference type="SMART" id="SM00981">
    <property type="entry name" value="THUMP"/>
    <property type="match status" value="1"/>
</dbReference>
<dbReference type="SUPFAM" id="SSF53335">
    <property type="entry name" value="S-adenosyl-L-methionine-dependent methyltransferases"/>
    <property type="match status" value="1"/>
</dbReference>
<dbReference type="SUPFAM" id="SSF143437">
    <property type="entry name" value="THUMP domain-like"/>
    <property type="match status" value="1"/>
</dbReference>
<dbReference type="PROSITE" id="PS51165">
    <property type="entry name" value="THUMP"/>
    <property type="match status" value="1"/>
</dbReference>
<dbReference type="PROSITE" id="PS01261">
    <property type="entry name" value="UPF0020"/>
    <property type="match status" value="1"/>
</dbReference>
<name>TMG10_METTH</name>
<keyword id="KW-0963">Cytoplasm</keyword>
<keyword id="KW-0489">Methyltransferase</keyword>
<keyword id="KW-1185">Reference proteome</keyword>
<keyword id="KW-0694">RNA-binding</keyword>
<keyword id="KW-0949">S-adenosyl-L-methionine</keyword>
<keyword id="KW-0808">Transferase</keyword>
<keyword id="KW-0819">tRNA processing</keyword>
<keyword id="KW-0820">tRNA-binding</keyword>
<comment type="function">
    <text evidence="1">Catalyzes the adenosylmethionine-dependent methylation of the exocyclic amino group (N(2)) of guanosine at position 10 of various tRNAs. Acts via a two-step process that leads to the formation of either N(2)-monomethyl (m(2)G) or N(2)-dimethylguanosine (m(2)(2)G) (By similarity).</text>
</comment>
<comment type="catalytic activity">
    <reaction>
        <text>guanosine(10) in tRNA + 2 S-adenosyl-L-methionine = N(2)-dimethylguanosine(10) in tRNA + 2 S-adenosyl-L-homocysteine + 2 H(+)</text>
        <dbReference type="Rhea" id="RHEA:43124"/>
        <dbReference type="Rhea" id="RHEA-COMP:10355"/>
        <dbReference type="Rhea" id="RHEA-COMP:10358"/>
        <dbReference type="ChEBI" id="CHEBI:15378"/>
        <dbReference type="ChEBI" id="CHEBI:57856"/>
        <dbReference type="ChEBI" id="CHEBI:59789"/>
        <dbReference type="ChEBI" id="CHEBI:74269"/>
        <dbReference type="ChEBI" id="CHEBI:74513"/>
        <dbReference type="EC" id="2.1.1.213"/>
    </reaction>
</comment>
<comment type="subunit">
    <text evidence="1">Monomer.</text>
</comment>
<comment type="subcellular location">
    <subcellularLocation>
        <location evidence="3">Cytoplasm</location>
    </subcellularLocation>
</comment>
<comment type="similarity">
    <text evidence="3">Belongs to the methyltransferase superfamily. Trm-G10 family.</text>
</comment>
<feature type="chain" id="PRO_0000140482" description="tRNA (guanine(10)-N2)-dimethyltransferase">
    <location>
        <begin position="1"/>
        <end position="336"/>
    </location>
</feature>
<feature type="domain" description="THUMP" evidence="2">
    <location>
        <begin position="50"/>
        <end position="147"/>
    </location>
</feature>
<evidence type="ECO:0000250" key="1"/>
<evidence type="ECO:0000255" key="2">
    <source>
        <dbReference type="PROSITE-ProRule" id="PRU00529"/>
    </source>
</evidence>
<evidence type="ECO:0000305" key="3"/>
<gene>
    <name type="primary">trmG10</name>
    <name type="ordered locus">MTH_724</name>
</gene>
<organism>
    <name type="scientific">Methanothermobacter thermautotrophicus (strain ATCC 29096 / DSM 1053 / JCM 10044 / NBRC 100330 / Delta H)</name>
    <name type="common">Methanobacterium thermoautotrophicum</name>
    <dbReference type="NCBI Taxonomy" id="187420"/>
    <lineage>
        <taxon>Archaea</taxon>
        <taxon>Methanobacteriati</taxon>
        <taxon>Methanobacteriota</taxon>
        <taxon>Methanomada group</taxon>
        <taxon>Methanobacteria</taxon>
        <taxon>Methanobacteriales</taxon>
        <taxon>Methanobacteriaceae</taxon>
        <taxon>Methanothermobacter</taxon>
    </lineage>
</organism>